<dbReference type="EMBL" id="FMJU01000010">
    <property type="protein sequence ID" value="SCO15025.1"/>
    <property type="molecule type" value="Genomic_DNA"/>
</dbReference>
<dbReference type="SMR" id="Q70LL3"/>
<dbReference type="EnsemblFungi" id="CCT75766">
    <property type="protein sequence ID" value="CCT75766"/>
    <property type="gene ID" value="FFUJ_11804"/>
</dbReference>
<dbReference type="HOGENOM" id="CLU_054785_2_1_1"/>
<dbReference type="OrthoDB" id="10261467at2759"/>
<dbReference type="GO" id="GO:0005783">
    <property type="term" value="C:endoplasmic reticulum"/>
    <property type="evidence" value="ECO:0007669"/>
    <property type="project" value="TreeGrafter"/>
</dbReference>
<dbReference type="GO" id="GO:0005886">
    <property type="term" value="C:plasma membrane"/>
    <property type="evidence" value="ECO:0007669"/>
    <property type="project" value="TreeGrafter"/>
</dbReference>
<dbReference type="GO" id="GO:0005216">
    <property type="term" value="F:monoatomic ion channel activity"/>
    <property type="evidence" value="ECO:0007669"/>
    <property type="project" value="InterPro"/>
</dbReference>
<dbReference type="GO" id="GO:0009881">
    <property type="term" value="F:photoreceptor activity"/>
    <property type="evidence" value="ECO:0007669"/>
    <property type="project" value="UniProtKB-KW"/>
</dbReference>
<dbReference type="GO" id="GO:0007602">
    <property type="term" value="P:phototransduction"/>
    <property type="evidence" value="ECO:0007669"/>
    <property type="project" value="UniProtKB-KW"/>
</dbReference>
<dbReference type="CDD" id="cd15239">
    <property type="entry name" value="7tm_YRO2_fungal-like"/>
    <property type="match status" value="1"/>
</dbReference>
<dbReference type="FunFam" id="1.20.1070.10:FF:000160">
    <property type="entry name" value="Related to Opsin-1"/>
    <property type="match status" value="1"/>
</dbReference>
<dbReference type="Gene3D" id="1.20.1070.10">
    <property type="entry name" value="Rhodopsin 7-helix transmembrane proteins"/>
    <property type="match status" value="1"/>
</dbReference>
<dbReference type="InterPro" id="IPR001425">
    <property type="entry name" value="Arc/bac/fun_rhodopsins"/>
</dbReference>
<dbReference type="InterPro" id="IPR018229">
    <property type="entry name" value="Rhodopsin_retinal_BS"/>
</dbReference>
<dbReference type="InterPro" id="IPR043476">
    <property type="entry name" value="Yro2-like_7TM"/>
</dbReference>
<dbReference type="PANTHER" id="PTHR28286">
    <property type="match status" value="1"/>
</dbReference>
<dbReference type="PANTHER" id="PTHR28286:SF1">
    <property type="entry name" value="30 KDA HEAT SHOCK PROTEIN-RELATED"/>
    <property type="match status" value="1"/>
</dbReference>
<dbReference type="Pfam" id="PF01036">
    <property type="entry name" value="Bac_rhodopsin"/>
    <property type="match status" value="1"/>
</dbReference>
<dbReference type="PRINTS" id="PR00251">
    <property type="entry name" value="BACTRLOPSIN"/>
</dbReference>
<dbReference type="SMART" id="SM01021">
    <property type="entry name" value="Bac_rhodopsin"/>
    <property type="match status" value="1"/>
</dbReference>
<dbReference type="SUPFAM" id="SSF81321">
    <property type="entry name" value="Family A G protein-coupled receptor-like"/>
    <property type="match status" value="1"/>
</dbReference>
<dbReference type="PROSITE" id="PS00950">
    <property type="entry name" value="BACTERIAL_OPSIN_1"/>
    <property type="match status" value="1"/>
</dbReference>
<proteinExistence type="evidence at transcript level"/>
<gene>
    <name evidence="5" type="primary">carO</name>
    <name type="ORF">FFC1_12352</name>
</gene>
<organism>
    <name type="scientific">Fusarium fujikuroi</name>
    <name type="common">Bakanae and foot rot disease fungus</name>
    <name type="synonym">Gibberella fujikuroi</name>
    <dbReference type="NCBI Taxonomy" id="5127"/>
    <lineage>
        <taxon>Eukaryota</taxon>
        <taxon>Fungi</taxon>
        <taxon>Dikarya</taxon>
        <taxon>Ascomycota</taxon>
        <taxon>Pezizomycotina</taxon>
        <taxon>Sordariomycetes</taxon>
        <taxon>Hypocreomycetidae</taxon>
        <taxon>Hypocreales</taxon>
        <taxon>Nectriaceae</taxon>
        <taxon>Fusarium</taxon>
        <taxon>Fusarium fujikuroi species complex</taxon>
    </lineage>
</organism>
<reference key="1">
    <citation type="submission" date="2016-09" db="EMBL/GenBank/DDBJ databases">
        <authorList>
            <person name="Guldener U."/>
        </authorList>
    </citation>
    <scope>NUCLEOTIDE SEQUENCE [LARGE SCALE GENOMIC DNA]</scope>
    <source>
        <strain>C1995</strain>
    </source>
</reference>
<reference key="2">
    <citation type="journal article" date="2004" name="Curr. Genet.">
        <title>A gene of the opsin family in the carotenoid gene cluster of Fusarium fujikuroi.</title>
        <authorList>
            <person name="Prado M.M."/>
            <person name="Prado-Cabrero A."/>
            <person name="Fernandez-Martin R."/>
            <person name="Avalos J."/>
        </authorList>
    </citation>
    <scope>FUNCTION</scope>
    <scope>DISRUPTION PHENOTYPE</scope>
    <scope>INDUCTION</scope>
</reference>
<comment type="function">
    <text evidence="4 7">Opsin-like protein; part of the car gene cluster that mediates the biosynthesis of neurosporaxanthin, a carboxylic apocarotenoid acting as an essential protective pigment and leading to orange pigmentation (PubMed:15133714). The exact role of carO in carotenoid biosynthesis is not known yet, but it could be involved in the regulation of the pathway by light or other stimuli (Probable).</text>
</comment>
<comment type="subcellular location">
    <subcellularLocation>
        <location evidence="1">Membrane</location>
        <topology evidence="1">Multi-pass membrane protein</topology>
    </subcellularLocation>
</comment>
<comment type="induction">
    <text evidence="4">The expression is subject to photoinduction (PubMed:15133714). Expression is slightly induced after 2 hours of incubation at 42 degrees Celsius (PubMed:15133714).</text>
</comment>
<comment type="disruption phenotype">
    <text evidence="4">Does not lead to any apparent phenotypic modification, including no change in the photoinduction of carotenoid biosynthesis.</text>
</comment>
<comment type="similarity">
    <text evidence="6">Belongs to the archaeal/bacterial/fungal opsin family.</text>
</comment>
<accession>Q70LL3</accession>
<feature type="chain" id="PRO_0000456848" description="Opsin-like protein carO">
    <location>
        <begin position="1"/>
        <end position="307"/>
    </location>
</feature>
<feature type="transmembrane region" description="Helical" evidence="1">
    <location>
        <begin position="36"/>
        <end position="56"/>
    </location>
</feature>
<feature type="transmembrane region" description="Helical" evidence="1">
    <location>
        <begin position="64"/>
        <end position="84"/>
    </location>
</feature>
<feature type="transmembrane region" description="Helical" evidence="1">
    <location>
        <begin position="118"/>
        <end position="138"/>
    </location>
</feature>
<feature type="transmembrane region" description="Helical" evidence="1">
    <location>
        <begin position="140"/>
        <end position="160"/>
    </location>
</feature>
<feature type="transmembrane region" description="Helical" evidence="1">
    <location>
        <begin position="166"/>
        <end position="186"/>
    </location>
</feature>
<feature type="transmembrane region" description="Helical" evidence="1">
    <location>
        <begin position="202"/>
        <end position="222"/>
    </location>
</feature>
<feature type="transmembrane region" description="Helical" evidence="1">
    <location>
        <begin position="235"/>
        <end position="255"/>
    </location>
</feature>
<feature type="region of interest" description="Disordered" evidence="3">
    <location>
        <begin position="280"/>
        <end position="307"/>
    </location>
</feature>
<feature type="compositionally biased region" description="Polar residues" evidence="3">
    <location>
        <begin position="294"/>
        <end position="307"/>
    </location>
</feature>
<feature type="glycosylation site" description="N-linked (GlcNAc...) asparagine" evidence="2">
    <location>
        <position position="28"/>
    </location>
</feature>
<feature type="glycosylation site" description="N-linked (GlcNAc...) asparagine" evidence="2">
    <location>
        <position position="293"/>
    </location>
</feature>
<keyword id="KW-0157">Chromophore</keyword>
<keyword id="KW-0325">Glycoprotein</keyword>
<keyword id="KW-0472">Membrane</keyword>
<keyword id="KW-0600">Photoreceptor protein</keyword>
<keyword id="KW-0675">Receptor</keyword>
<keyword id="KW-0681">Retinal protein</keyword>
<keyword id="KW-0716">Sensory transduction</keyword>
<keyword id="KW-0346">Stress response</keyword>
<keyword id="KW-0812">Transmembrane</keyword>
<keyword id="KW-1133">Transmembrane helix</keyword>
<sequence>MADHLYARKNDALNVNPDIVNGQRSDINITVRGSDWYWAVCAVMTVSTFAFLGLGMRKPRTDRIFHYITAGITMIASIAYFTMASNLGWTPIAVEFQRSNHRVAGIYREIFYARYIDWFLTTPLLLTDLLLTAGMPWPTVLWVILVDWVMIVTGLVGALVKSSYKWGYFAFGCAALAYIVYVLAWEARLHAKHVGPDVGRTFVMCGSLTAVVWILYPIAWGVCEGGNLIAPDSEAVFYGILDLIAKPVFGALLLWGHRNIDPARLGLRIRDIDERIFPDGPNNKVASGHGARNDTATASGSNVNPNA</sequence>
<evidence type="ECO:0000255" key="1"/>
<evidence type="ECO:0000255" key="2">
    <source>
        <dbReference type="PROSITE-ProRule" id="PRU00498"/>
    </source>
</evidence>
<evidence type="ECO:0000256" key="3">
    <source>
        <dbReference type="SAM" id="MobiDB-lite"/>
    </source>
</evidence>
<evidence type="ECO:0000269" key="4">
    <source>
    </source>
</evidence>
<evidence type="ECO:0000303" key="5">
    <source>
    </source>
</evidence>
<evidence type="ECO:0000305" key="6"/>
<evidence type="ECO:0000305" key="7">
    <source>
    </source>
</evidence>
<name>CARO_FUSFU</name>
<protein>
    <recommendedName>
        <fullName evidence="5">Opsin-like protein carO</fullName>
    </recommendedName>
    <alternativeName>
        <fullName evidence="5">Carotenoid biosynthesis cluster protein O</fullName>
    </alternativeName>
</protein>